<keyword id="KW-0342">GTP-binding</keyword>
<keyword id="KW-0436">Ligase</keyword>
<keyword id="KW-0460">Magnesium</keyword>
<keyword id="KW-0464">Manganese</keyword>
<keyword id="KW-0479">Metal-binding</keyword>
<keyword id="KW-0547">Nucleotide-binding</keyword>
<keyword id="KW-0630">Potassium</keyword>
<accession>Q8PX01</accession>
<protein>
    <recommendedName>
        <fullName evidence="1">Coenzyme F420:L-glutamate ligase</fullName>
        <ecNumber evidence="1">6.3.2.31</ecNumber>
        <ecNumber evidence="1">6.3.2.34</ecNumber>
    </recommendedName>
    <alternativeName>
        <fullName evidence="1">Coenzyme F420-0:L-glutamate ligase</fullName>
    </alternativeName>
    <alternativeName>
        <fullName evidence="1">Coenzyme F420-1:gamma-L-glutamate ligase</fullName>
    </alternativeName>
</protein>
<reference key="1">
    <citation type="journal article" date="2002" name="J. Mol. Microbiol. Biotechnol.">
        <title>The genome of Methanosarcina mazei: evidence for lateral gene transfer between Bacteria and Archaea.</title>
        <authorList>
            <person name="Deppenmeier U."/>
            <person name="Johann A."/>
            <person name="Hartsch T."/>
            <person name="Merkl R."/>
            <person name="Schmitz R.A."/>
            <person name="Martinez-Arias R."/>
            <person name="Henne A."/>
            <person name="Wiezer A."/>
            <person name="Baeumer S."/>
            <person name="Jacobi C."/>
            <person name="Brueggemann H."/>
            <person name="Lienard T."/>
            <person name="Christmann A."/>
            <person name="Boemecke M."/>
            <person name="Steckel S."/>
            <person name="Bhattacharyya A."/>
            <person name="Lykidis A."/>
            <person name="Overbeek R."/>
            <person name="Klenk H.-P."/>
            <person name="Gunsalus R.P."/>
            <person name="Fritz H.-J."/>
            <person name="Gottschalk G."/>
        </authorList>
    </citation>
    <scope>NUCLEOTIDE SEQUENCE [LARGE SCALE GENOMIC DNA]</scope>
    <source>
        <strain>ATCC BAA-159 / DSM 3647 / Goe1 / Go1 / JCM 11833 / OCM 88</strain>
    </source>
</reference>
<feature type="chain" id="PRO_0000145791" description="Coenzyme F420:L-glutamate ligase">
    <location>
        <begin position="1"/>
        <end position="254"/>
    </location>
</feature>
<feature type="binding site" evidence="1">
    <location>
        <begin position="11"/>
        <end position="14"/>
    </location>
    <ligand>
        <name>GTP</name>
        <dbReference type="ChEBI" id="CHEBI:37565"/>
    </ligand>
</feature>
<feature type="binding site" evidence="1">
    <location>
        <begin position="40"/>
        <end position="41"/>
    </location>
    <ligand>
        <name>GTP</name>
        <dbReference type="ChEBI" id="CHEBI:37565"/>
    </ligand>
</feature>
<feature type="binding site" evidence="1">
    <location>
        <position position="45"/>
    </location>
    <ligand>
        <name>GTP</name>
        <dbReference type="ChEBI" id="CHEBI:37565"/>
    </ligand>
</feature>
<feature type="binding site" evidence="1">
    <location>
        <position position="109"/>
    </location>
    <ligand>
        <name>a divalent metal cation</name>
        <dbReference type="ChEBI" id="CHEBI:60240"/>
        <label>1</label>
    </ligand>
</feature>
<feature type="binding site" evidence="1">
    <location>
        <position position="112"/>
    </location>
    <ligand>
        <name>GTP</name>
        <dbReference type="ChEBI" id="CHEBI:37565"/>
    </ligand>
</feature>
<feature type="binding site" evidence="1">
    <location>
        <position position="150"/>
    </location>
    <ligand>
        <name>a divalent metal cation</name>
        <dbReference type="ChEBI" id="CHEBI:60240"/>
        <label>1</label>
    </ligand>
</feature>
<feature type="binding site" evidence="1">
    <location>
        <position position="151"/>
    </location>
    <ligand>
        <name>a divalent metal cation</name>
        <dbReference type="ChEBI" id="CHEBI:60240"/>
        <label>2</label>
    </ligand>
</feature>
<feature type="binding site" evidence="1">
    <location>
        <begin position="206"/>
        <end position="213"/>
    </location>
    <ligand>
        <name>GTP</name>
        <dbReference type="ChEBI" id="CHEBI:37565"/>
    </ligand>
</feature>
<feature type="binding site" evidence="1">
    <location>
        <position position="208"/>
    </location>
    <ligand>
        <name>a divalent metal cation</name>
        <dbReference type="ChEBI" id="CHEBI:60240"/>
        <label>2</label>
    </ligand>
</feature>
<gene>
    <name evidence="1" type="primary">cofE</name>
    <name type="ordered locus">MM_1421</name>
</gene>
<sequence length="254" mass="27741">MKFEAIAVEKIPLIHEGDNLPSIICEKIGLQDRDIMIIASTIVAKAEGEIFRLEDITPGEEALEIAARTGKDPRFIQAVLSKSREVFVETPFMLVTTLAGHTCVNAGIDESNIENGFLLYPPENPDASALKIGKELEKLSGKKLSIIITDTNGRAFKIGQTGVAIGIYNIKPVKRWIGEKDLFGKVLEITEQAIADELAGAANLLMGEGAGGIPVVIIRGLDYYCEGDTSIKESYRPENMDVIKQGLRCLRNKK</sequence>
<comment type="function">
    <text evidence="1">Catalyzes the GTP-dependent successive addition of two or more gamma-linked L-glutamates to the L-lactyl phosphodiester of 7,8-didemethyl-8-hydroxy-5-deazariboflavin (F420-0) to form coenzyme F420-0-glutamyl-glutamate (F420-2) or polyglutamated F420 derivatives.</text>
</comment>
<comment type="catalytic activity">
    <reaction evidence="1">
        <text>oxidized coenzyme F420-0 + GTP + L-glutamate = oxidized coenzyme F420-1 + GDP + phosphate + H(+)</text>
        <dbReference type="Rhea" id="RHEA:30555"/>
        <dbReference type="ChEBI" id="CHEBI:15378"/>
        <dbReference type="ChEBI" id="CHEBI:29985"/>
        <dbReference type="ChEBI" id="CHEBI:37565"/>
        <dbReference type="ChEBI" id="CHEBI:43474"/>
        <dbReference type="ChEBI" id="CHEBI:58189"/>
        <dbReference type="ChEBI" id="CHEBI:59907"/>
        <dbReference type="ChEBI" id="CHEBI:59920"/>
        <dbReference type="EC" id="6.3.2.31"/>
    </reaction>
</comment>
<comment type="catalytic activity">
    <reaction evidence="1">
        <text>oxidized coenzyme F420-1 + GTP + L-glutamate = oxidized coenzyme F420-2 + GDP + phosphate + H(+)</text>
        <dbReference type="Rhea" id="RHEA:30523"/>
        <dbReference type="ChEBI" id="CHEBI:15378"/>
        <dbReference type="ChEBI" id="CHEBI:29985"/>
        <dbReference type="ChEBI" id="CHEBI:37565"/>
        <dbReference type="ChEBI" id="CHEBI:43474"/>
        <dbReference type="ChEBI" id="CHEBI:57922"/>
        <dbReference type="ChEBI" id="CHEBI:58189"/>
        <dbReference type="ChEBI" id="CHEBI:59920"/>
        <dbReference type="EC" id="6.3.2.34"/>
    </reaction>
</comment>
<comment type="cofactor">
    <cofactor evidence="1">
        <name>Mg(2+)</name>
        <dbReference type="ChEBI" id="CHEBI:18420"/>
    </cofactor>
    <cofactor evidence="1">
        <name>Mn(2+)</name>
        <dbReference type="ChEBI" id="CHEBI:29035"/>
    </cofactor>
    <text evidence="1">Binds 2 divalent metal cations per subunit. The ions could be magnesium and/or manganese.</text>
</comment>
<comment type="cofactor">
    <cofactor evidence="1">
        <name>K(+)</name>
        <dbReference type="ChEBI" id="CHEBI:29103"/>
    </cofactor>
    <text evidence="1">Monovalent cation. The ion could be potassium.</text>
</comment>
<comment type="pathway">
    <text evidence="1">Cofactor biosynthesis; coenzyme F420 biosynthesis.</text>
</comment>
<comment type="subunit">
    <text evidence="1">Homodimer.</text>
</comment>
<comment type="similarity">
    <text evidence="1">Belongs to the CofE family.</text>
</comment>
<evidence type="ECO:0000255" key="1">
    <source>
        <dbReference type="HAMAP-Rule" id="MF_01258"/>
    </source>
</evidence>
<dbReference type="EC" id="6.3.2.31" evidence="1"/>
<dbReference type="EC" id="6.3.2.34" evidence="1"/>
<dbReference type="EMBL" id="AE008384">
    <property type="protein sequence ID" value="AAM31117.1"/>
    <property type="molecule type" value="Genomic_DNA"/>
</dbReference>
<dbReference type="RefSeq" id="WP_011033367.1">
    <property type="nucleotide sequence ID" value="NC_003901.1"/>
</dbReference>
<dbReference type="SMR" id="Q8PX01"/>
<dbReference type="KEGG" id="mma:MM_1421"/>
<dbReference type="PATRIC" id="fig|192952.21.peg.1645"/>
<dbReference type="eggNOG" id="arCOG02714">
    <property type="taxonomic scope" value="Archaea"/>
</dbReference>
<dbReference type="HOGENOM" id="CLU_051152_1_1_2"/>
<dbReference type="UniPathway" id="UPA00071"/>
<dbReference type="Proteomes" id="UP000000595">
    <property type="component" value="Chromosome"/>
</dbReference>
<dbReference type="GO" id="GO:0052618">
    <property type="term" value="F:coenzyme F420-0:L-glutamate ligase activity"/>
    <property type="evidence" value="ECO:0007669"/>
    <property type="project" value="UniProtKB-UniRule"/>
</dbReference>
<dbReference type="GO" id="GO:0052619">
    <property type="term" value="F:coenzyme F420-1:gamma-L-glutamate ligase activity"/>
    <property type="evidence" value="ECO:0007669"/>
    <property type="project" value="UniProtKB-UniRule"/>
</dbReference>
<dbReference type="GO" id="GO:0005525">
    <property type="term" value="F:GTP binding"/>
    <property type="evidence" value="ECO:0007669"/>
    <property type="project" value="UniProtKB-KW"/>
</dbReference>
<dbReference type="GO" id="GO:0046872">
    <property type="term" value="F:metal ion binding"/>
    <property type="evidence" value="ECO:0007669"/>
    <property type="project" value="UniProtKB-KW"/>
</dbReference>
<dbReference type="GO" id="GO:0052645">
    <property type="term" value="P:F420-0 metabolic process"/>
    <property type="evidence" value="ECO:0007669"/>
    <property type="project" value="UniProtKB-UniRule"/>
</dbReference>
<dbReference type="Gene3D" id="3.30.1330.100">
    <property type="entry name" value="CofE-like"/>
    <property type="match status" value="1"/>
</dbReference>
<dbReference type="Gene3D" id="3.90.1660.10">
    <property type="entry name" value="CofE-like domain"/>
    <property type="match status" value="1"/>
</dbReference>
<dbReference type="HAMAP" id="MF_01258">
    <property type="entry name" value="F420_ligase_CofE"/>
    <property type="match status" value="1"/>
</dbReference>
<dbReference type="InterPro" id="IPR008225">
    <property type="entry name" value="F420-0_g-glutamyl_ligase"/>
</dbReference>
<dbReference type="InterPro" id="IPR002847">
    <property type="entry name" value="F420-0_gamma-glut_ligase-dom"/>
</dbReference>
<dbReference type="InterPro" id="IPR023659">
    <property type="entry name" value="F420_ligase_CofE_arc"/>
</dbReference>
<dbReference type="NCBIfam" id="TIGR01916">
    <property type="entry name" value="F420_cofE"/>
    <property type="match status" value="1"/>
</dbReference>
<dbReference type="NCBIfam" id="NF009809">
    <property type="entry name" value="PRK13293.1"/>
    <property type="match status" value="1"/>
</dbReference>
<dbReference type="PANTHER" id="PTHR47917">
    <property type="match status" value="1"/>
</dbReference>
<dbReference type="PANTHER" id="PTHR47917:SF1">
    <property type="entry name" value="COENZYME F420:L-GLUTAMATE LIGASE"/>
    <property type="match status" value="1"/>
</dbReference>
<dbReference type="Pfam" id="PF01996">
    <property type="entry name" value="F420_ligase"/>
    <property type="match status" value="1"/>
</dbReference>
<dbReference type="SUPFAM" id="SSF144010">
    <property type="entry name" value="CofE-like"/>
    <property type="match status" value="1"/>
</dbReference>
<proteinExistence type="inferred from homology"/>
<organism>
    <name type="scientific">Methanosarcina mazei (strain ATCC BAA-159 / DSM 3647 / Goe1 / Go1 / JCM 11833 / OCM 88)</name>
    <name type="common">Methanosarcina frisia</name>
    <dbReference type="NCBI Taxonomy" id="192952"/>
    <lineage>
        <taxon>Archaea</taxon>
        <taxon>Methanobacteriati</taxon>
        <taxon>Methanobacteriota</taxon>
        <taxon>Stenosarchaea group</taxon>
        <taxon>Methanomicrobia</taxon>
        <taxon>Methanosarcinales</taxon>
        <taxon>Methanosarcinaceae</taxon>
        <taxon>Methanosarcina</taxon>
    </lineage>
</organism>
<name>COFE_METMA</name>